<sequence>MIKVGIVGGTGYTGVELLRLLAQHPQAEVAVITSRSEAGVAVADMYPNLRGHYDGLAFSVPDSKALGACDVVFFATPHGVAHALAGELLAAGTKVIDLSADFRLQDATEWGKWYGQPHGAPELLKDAVYGLPEVNREKIRQARLIAVPGCYPTATQLGFLPLLEAGLADPSRLIADCKSGVSGAGRGAAVGSLFCEAGESMKAYAVKGHRHLPEISQGLRLAAGKDIGLTFVPHLTPMIRGIHATLYANVVDTSVDLQALFEKRYADEPFVDVMPAGSHPETRSVRGANVCRIAVHRPQGGDLVVVLSVIDNLVKGASGQAVQNLNILFGLDERMGLSHAGLLP</sequence>
<gene>
    <name evidence="1" type="primary">argC1</name>
    <name type="ordered locus">PP_0432</name>
</gene>
<name>ARGC1_PSEPK</name>
<keyword id="KW-0028">Amino-acid biosynthesis</keyword>
<keyword id="KW-0055">Arginine biosynthesis</keyword>
<keyword id="KW-0963">Cytoplasm</keyword>
<keyword id="KW-0521">NADP</keyword>
<keyword id="KW-0560">Oxidoreductase</keyword>
<keyword id="KW-1185">Reference proteome</keyword>
<dbReference type="EC" id="1.2.1.38" evidence="1"/>
<dbReference type="EMBL" id="AE015451">
    <property type="protein sequence ID" value="AAN66062.1"/>
    <property type="molecule type" value="Genomic_DNA"/>
</dbReference>
<dbReference type="RefSeq" id="NP_742598.1">
    <property type="nucleotide sequence ID" value="NC_002947.4"/>
</dbReference>
<dbReference type="SMR" id="Q88QQ6"/>
<dbReference type="STRING" id="160488.PP_0432"/>
<dbReference type="PaxDb" id="160488-PP_0432"/>
<dbReference type="KEGG" id="ppu:PP_0432"/>
<dbReference type="PATRIC" id="fig|160488.4.peg.463"/>
<dbReference type="eggNOG" id="COG0002">
    <property type="taxonomic scope" value="Bacteria"/>
</dbReference>
<dbReference type="HOGENOM" id="CLU_006384_0_1_6"/>
<dbReference type="OrthoDB" id="9801289at2"/>
<dbReference type="PhylomeDB" id="Q88QQ6"/>
<dbReference type="BioCyc" id="PPUT160488:G1G01-468-MONOMER"/>
<dbReference type="UniPathway" id="UPA00068">
    <property type="reaction ID" value="UER00108"/>
</dbReference>
<dbReference type="Proteomes" id="UP000000556">
    <property type="component" value="Chromosome"/>
</dbReference>
<dbReference type="GO" id="GO:0005737">
    <property type="term" value="C:cytoplasm"/>
    <property type="evidence" value="ECO:0007669"/>
    <property type="project" value="UniProtKB-SubCell"/>
</dbReference>
<dbReference type="GO" id="GO:0003942">
    <property type="term" value="F:N-acetyl-gamma-glutamyl-phosphate reductase activity"/>
    <property type="evidence" value="ECO:0007669"/>
    <property type="project" value="UniProtKB-UniRule"/>
</dbReference>
<dbReference type="GO" id="GO:0051287">
    <property type="term" value="F:NAD binding"/>
    <property type="evidence" value="ECO:0007669"/>
    <property type="project" value="InterPro"/>
</dbReference>
<dbReference type="GO" id="GO:0070401">
    <property type="term" value="F:NADP+ binding"/>
    <property type="evidence" value="ECO:0007669"/>
    <property type="project" value="InterPro"/>
</dbReference>
<dbReference type="GO" id="GO:0006526">
    <property type="term" value="P:L-arginine biosynthetic process"/>
    <property type="evidence" value="ECO:0007669"/>
    <property type="project" value="UniProtKB-UniRule"/>
</dbReference>
<dbReference type="CDD" id="cd23934">
    <property type="entry name" value="AGPR_1_C"/>
    <property type="match status" value="1"/>
</dbReference>
<dbReference type="CDD" id="cd17895">
    <property type="entry name" value="AGPR_1_N"/>
    <property type="match status" value="1"/>
</dbReference>
<dbReference type="FunFam" id="3.30.360.10:FF:000014">
    <property type="entry name" value="N-acetyl-gamma-glutamyl-phosphate reductase"/>
    <property type="match status" value="1"/>
</dbReference>
<dbReference type="Gene3D" id="3.30.360.10">
    <property type="entry name" value="Dihydrodipicolinate Reductase, domain 2"/>
    <property type="match status" value="1"/>
</dbReference>
<dbReference type="Gene3D" id="3.40.50.720">
    <property type="entry name" value="NAD(P)-binding Rossmann-like Domain"/>
    <property type="match status" value="1"/>
</dbReference>
<dbReference type="HAMAP" id="MF_00150">
    <property type="entry name" value="ArgC_type1"/>
    <property type="match status" value="1"/>
</dbReference>
<dbReference type="InterPro" id="IPR023013">
    <property type="entry name" value="AGPR_AS"/>
</dbReference>
<dbReference type="InterPro" id="IPR000706">
    <property type="entry name" value="AGPR_type-1"/>
</dbReference>
<dbReference type="InterPro" id="IPR036291">
    <property type="entry name" value="NAD(P)-bd_dom_sf"/>
</dbReference>
<dbReference type="InterPro" id="IPR050085">
    <property type="entry name" value="NAGSA_dehydrogenase"/>
</dbReference>
<dbReference type="InterPro" id="IPR000534">
    <property type="entry name" value="Semialdehyde_DH_NAD-bd"/>
</dbReference>
<dbReference type="NCBIfam" id="TIGR01850">
    <property type="entry name" value="argC"/>
    <property type="match status" value="1"/>
</dbReference>
<dbReference type="PANTHER" id="PTHR32338:SF10">
    <property type="entry name" value="N-ACETYL-GAMMA-GLUTAMYL-PHOSPHATE REDUCTASE, CHLOROPLASTIC-RELATED"/>
    <property type="match status" value="1"/>
</dbReference>
<dbReference type="PANTHER" id="PTHR32338">
    <property type="entry name" value="N-ACETYL-GAMMA-GLUTAMYL-PHOSPHATE REDUCTASE, CHLOROPLASTIC-RELATED-RELATED"/>
    <property type="match status" value="1"/>
</dbReference>
<dbReference type="Pfam" id="PF01118">
    <property type="entry name" value="Semialdhyde_dh"/>
    <property type="match status" value="1"/>
</dbReference>
<dbReference type="Pfam" id="PF22698">
    <property type="entry name" value="Semialdhyde_dhC_1"/>
    <property type="match status" value="1"/>
</dbReference>
<dbReference type="SMART" id="SM00859">
    <property type="entry name" value="Semialdhyde_dh"/>
    <property type="match status" value="1"/>
</dbReference>
<dbReference type="SUPFAM" id="SSF55347">
    <property type="entry name" value="Glyceraldehyde-3-phosphate dehydrogenase-like, C-terminal domain"/>
    <property type="match status" value="1"/>
</dbReference>
<dbReference type="SUPFAM" id="SSF51735">
    <property type="entry name" value="NAD(P)-binding Rossmann-fold domains"/>
    <property type="match status" value="1"/>
</dbReference>
<dbReference type="PROSITE" id="PS01224">
    <property type="entry name" value="ARGC"/>
    <property type="match status" value="1"/>
</dbReference>
<accession>Q88QQ6</accession>
<comment type="function">
    <text evidence="1">Catalyzes the NADPH-dependent reduction of N-acetyl-5-glutamyl phosphate to yield N-acetyl-L-glutamate 5-semialdehyde.</text>
</comment>
<comment type="catalytic activity">
    <reaction evidence="1">
        <text>N-acetyl-L-glutamate 5-semialdehyde + phosphate + NADP(+) = N-acetyl-L-glutamyl 5-phosphate + NADPH + H(+)</text>
        <dbReference type="Rhea" id="RHEA:21588"/>
        <dbReference type="ChEBI" id="CHEBI:15378"/>
        <dbReference type="ChEBI" id="CHEBI:29123"/>
        <dbReference type="ChEBI" id="CHEBI:43474"/>
        <dbReference type="ChEBI" id="CHEBI:57783"/>
        <dbReference type="ChEBI" id="CHEBI:57936"/>
        <dbReference type="ChEBI" id="CHEBI:58349"/>
        <dbReference type="EC" id="1.2.1.38"/>
    </reaction>
</comment>
<comment type="pathway">
    <text evidence="1">Amino-acid biosynthesis; L-arginine biosynthesis; N(2)-acetyl-L-ornithine from L-glutamate: step 3/4.</text>
</comment>
<comment type="subcellular location">
    <subcellularLocation>
        <location evidence="1">Cytoplasm</location>
    </subcellularLocation>
</comment>
<comment type="similarity">
    <text evidence="1">Belongs to the NAGSA dehydrogenase family. Type 1 subfamily.</text>
</comment>
<organism>
    <name type="scientific">Pseudomonas putida (strain ATCC 47054 / DSM 6125 / CFBP 8728 / NCIMB 11950 / KT2440)</name>
    <dbReference type="NCBI Taxonomy" id="160488"/>
    <lineage>
        <taxon>Bacteria</taxon>
        <taxon>Pseudomonadati</taxon>
        <taxon>Pseudomonadota</taxon>
        <taxon>Gammaproteobacteria</taxon>
        <taxon>Pseudomonadales</taxon>
        <taxon>Pseudomonadaceae</taxon>
        <taxon>Pseudomonas</taxon>
    </lineage>
</organism>
<evidence type="ECO:0000255" key="1">
    <source>
        <dbReference type="HAMAP-Rule" id="MF_00150"/>
    </source>
</evidence>
<protein>
    <recommendedName>
        <fullName evidence="1">N-acetyl-gamma-glutamyl-phosphate reductase 1</fullName>
        <shortName evidence="1">AGPR 1</shortName>
        <ecNumber evidence="1">1.2.1.38</ecNumber>
    </recommendedName>
    <alternativeName>
        <fullName evidence="1">N-acetyl-glutamate semialdehyde dehydrogenase 1</fullName>
        <shortName evidence="1">NAGSA dehydrogenase 1</shortName>
    </alternativeName>
</protein>
<feature type="chain" id="PRO_0000112438" description="N-acetyl-gamma-glutamyl-phosphate reductase 1">
    <location>
        <begin position="1"/>
        <end position="344"/>
    </location>
</feature>
<feature type="active site" evidence="1">
    <location>
        <position position="150"/>
    </location>
</feature>
<proteinExistence type="inferred from homology"/>
<reference key="1">
    <citation type="journal article" date="2002" name="Environ. Microbiol.">
        <title>Complete genome sequence and comparative analysis of the metabolically versatile Pseudomonas putida KT2440.</title>
        <authorList>
            <person name="Nelson K.E."/>
            <person name="Weinel C."/>
            <person name="Paulsen I.T."/>
            <person name="Dodson R.J."/>
            <person name="Hilbert H."/>
            <person name="Martins dos Santos V.A.P."/>
            <person name="Fouts D.E."/>
            <person name="Gill S.R."/>
            <person name="Pop M."/>
            <person name="Holmes M."/>
            <person name="Brinkac L.M."/>
            <person name="Beanan M.J."/>
            <person name="DeBoy R.T."/>
            <person name="Daugherty S.C."/>
            <person name="Kolonay J.F."/>
            <person name="Madupu R."/>
            <person name="Nelson W.C."/>
            <person name="White O."/>
            <person name="Peterson J.D."/>
            <person name="Khouri H.M."/>
            <person name="Hance I."/>
            <person name="Chris Lee P."/>
            <person name="Holtzapple E.K."/>
            <person name="Scanlan D."/>
            <person name="Tran K."/>
            <person name="Moazzez A."/>
            <person name="Utterback T.R."/>
            <person name="Rizzo M."/>
            <person name="Lee K."/>
            <person name="Kosack D."/>
            <person name="Moestl D."/>
            <person name="Wedler H."/>
            <person name="Lauber J."/>
            <person name="Stjepandic D."/>
            <person name="Hoheisel J."/>
            <person name="Straetz M."/>
            <person name="Heim S."/>
            <person name="Kiewitz C."/>
            <person name="Eisen J.A."/>
            <person name="Timmis K.N."/>
            <person name="Duesterhoeft A."/>
            <person name="Tuemmler B."/>
            <person name="Fraser C.M."/>
        </authorList>
    </citation>
    <scope>NUCLEOTIDE SEQUENCE [LARGE SCALE GENOMIC DNA]</scope>
    <source>
        <strain>ATCC 47054 / DSM 6125 / CFBP 8728 / NCIMB 11950 / KT2440</strain>
    </source>
</reference>